<organism>
    <name type="scientific">Petunia axillaris</name>
    <name type="common">Large white petunia</name>
    <name type="synonym">Nicotiana axillaris</name>
    <dbReference type="NCBI Taxonomy" id="33119"/>
    <lineage>
        <taxon>Eukaryota</taxon>
        <taxon>Viridiplantae</taxon>
        <taxon>Streptophyta</taxon>
        <taxon>Embryophyta</taxon>
        <taxon>Tracheophyta</taxon>
        <taxon>Spermatophyta</taxon>
        <taxon>Magnoliopsida</taxon>
        <taxon>eudicotyledons</taxon>
        <taxon>Gunneridae</taxon>
        <taxon>Pentapetalae</taxon>
        <taxon>asterids</taxon>
        <taxon>lamiids</taxon>
        <taxon>Solanales</taxon>
        <taxon>Solanaceae</taxon>
        <taxon>Petunioideae</taxon>
        <taxon>Petunia</taxon>
    </lineage>
</organism>
<gene>
    <name evidence="7" type="primary">PDR1</name>
</gene>
<keyword id="KW-0067">ATP-binding</keyword>
<keyword id="KW-1003">Cell membrane</keyword>
<keyword id="KW-0472">Membrane</keyword>
<keyword id="KW-0547">Nucleotide-binding</keyword>
<keyword id="KW-0677">Repeat</keyword>
<keyword id="KW-0812">Transmembrane</keyword>
<keyword id="KW-1133">Transmembrane helix</keyword>
<keyword id="KW-0813">Transport</keyword>
<proteinExistence type="evidence at transcript level"/>
<name>PDR1_PETAX</name>
<feature type="chain" id="PRO_0000447561" description="Pleiotropic drug resistance protein 1">
    <location>
        <begin position="1"/>
        <end position="1452"/>
    </location>
</feature>
<feature type="transmembrane region" description="Helical" evidence="1">
    <location>
        <begin position="521"/>
        <end position="541"/>
    </location>
</feature>
<feature type="transmembrane region" description="Helical" evidence="1">
    <location>
        <begin position="554"/>
        <end position="574"/>
    </location>
</feature>
<feature type="transmembrane region" description="Helical" evidence="1">
    <location>
        <begin position="609"/>
        <end position="629"/>
    </location>
</feature>
<feature type="transmembrane region" description="Helical" evidence="1">
    <location>
        <begin position="640"/>
        <end position="660"/>
    </location>
</feature>
<feature type="transmembrane region" description="Helical" evidence="1">
    <location>
        <begin position="664"/>
        <end position="684"/>
    </location>
</feature>
<feature type="transmembrane region" description="Helical" evidence="1">
    <location>
        <begin position="694"/>
        <end position="714"/>
    </location>
</feature>
<feature type="transmembrane region" description="Helical" evidence="1">
    <location>
        <begin position="753"/>
        <end position="773"/>
    </location>
</feature>
<feature type="transmembrane region" description="Helical" evidence="1">
    <location>
        <begin position="1199"/>
        <end position="1219"/>
    </location>
</feature>
<feature type="transmembrane region" description="Helical" evidence="1">
    <location>
        <begin position="1239"/>
        <end position="1259"/>
    </location>
</feature>
<feature type="transmembrane region" description="Helical" evidence="1">
    <location>
        <begin position="1287"/>
        <end position="1307"/>
    </location>
</feature>
<feature type="transmembrane region" description="Helical" evidence="1">
    <location>
        <begin position="1314"/>
        <end position="1334"/>
    </location>
</feature>
<feature type="transmembrane region" description="Helical" evidence="1">
    <location>
        <begin position="1344"/>
        <end position="1364"/>
    </location>
</feature>
<feature type="transmembrane region" description="Helical" evidence="1">
    <location>
        <begin position="1375"/>
        <end position="1395"/>
    </location>
</feature>
<feature type="transmembrane region" description="Helical" evidence="1">
    <location>
        <begin position="1421"/>
        <end position="1441"/>
    </location>
</feature>
<feature type="domain" description="ABC transporter 1" evidence="2">
    <location>
        <begin position="152"/>
        <end position="425"/>
    </location>
</feature>
<feature type="domain" description="ABC transmembrane type-2 1" evidence="1">
    <location>
        <begin position="504"/>
        <end position="716"/>
    </location>
</feature>
<feature type="domain" description="ABC transporter 2" evidence="2">
    <location>
        <begin position="855"/>
        <end position="1107"/>
    </location>
</feature>
<feature type="domain" description="ABC transmembrane type-2 2" evidence="1">
    <location>
        <begin position="1180"/>
        <end position="1394"/>
    </location>
</feature>
<feature type="region of interest" description="Disordered" evidence="3">
    <location>
        <begin position="808"/>
        <end position="830"/>
    </location>
</feature>
<feature type="compositionally biased region" description="Basic and acidic residues" evidence="3">
    <location>
        <begin position="812"/>
        <end position="821"/>
    </location>
</feature>
<feature type="binding site" evidence="2">
    <location>
        <begin position="185"/>
        <end position="192"/>
    </location>
    <ligand>
        <name>ATP</name>
        <dbReference type="ChEBI" id="CHEBI:30616"/>
    </ligand>
</feature>
<feature type="binding site" evidence="2">
    <location>
        <begin position="900"/>
        <end position="907"/>
    </location>
    <ligand>
        <name>ATP</name>
        <dbReference type="ChEBI" id="CHEBI:30616"/>
    </ligand>
</feature>
<dbReference type="EMBL" id="JQ292812">
    <property type="protein sequence ID" value="AFA43815.1"/>
    <property type="molecule type" value="Genomic_DNA"/>
</dbReference>
<dbReference type="SMR" id="H6WS93"/>
<dbReference type="GO" id="GO:0005886">
    <property type="term" value="C:plasma membrane"/>
    <property type="evidence" value="ECO:0000314"/>
    <property type="project" value="UniProtKB"/>
</dbReference>
<dbReference type="GO" id="GO:0140359">
    <property type="term" value="F:ABC-type transporter activity"/>
    <property type="evidence" value="ECO:0007669"/>
    <property type="project" value="InterPro"/>
</dbReference>
<dbReference type="GO" id="GO:0005524">
    <property type="term" value="F:ATP binding"/>
    <property type="evidence" value="ECO:0007669"/>
    <property type="project" value="UniProtKB-KW"/>
</dbReference>
<dbReference type="GO" id="GO:0016887">
    <property type="term" value="F:ATP hydrolysis activity"/>
    <property type="evidence" value="ECO:0007669"/>
    <property type="project" value="InterPro"/>
</dbReference>
<dbReference type="GO" id="GO:0009914">
    <property type="term" value="P:hormone transport"/>
    <property type="evidence" value="ECO:0000315"/>
    <property type="project" value="UniProtKB"/>
</dbReference>
<dbReference type="GO" id="GO:2000032">
    <property type="term" value="P:regulation of secondary shoot formation"/>
    <property type="evidence" value="ECO:0000315"/>
    <property type="project" value="UniProtKB"/>
</dbReference>
<dbReference type="CDD" id="cd03233">
    <property type="entry name" value="ABCG_PDR_domain1"/>
    <property type="match status" value="1"/>
</dbReference>
<dbReference type="CDD" id="cd03232">
    <property type="entry name" value="ABCG_PDR_domain2"/>
    <property type="match status" value="1"/>
</dbReference>
<dbReference type="FunFam" id="3.40.50.300:FF:000179">
    <property type="entry name" value="ABC transporter G family member 34"/>
    <property type="match status" value="1"/>
</dbReference>
<dbReference type="FunFam" id="3.40.50.300:FF:000059">
    <property type="entry name" value="ABC transporter G family member 40"/>
    <property type="match status" value="1"/>
</dbReference>
<dbReference type="Gene3D" id="3.40.50.300">
    <property type="entry name" value="P-loop containing nucleotide triphosphate hydrolases"/>
    <property type="match status" value="2"/>
</dbReference>
<dbReference type="InterPro" id="IPR003593">
    <property type="entry name" value="AAA+_ATPase"/>
</dbReference>
<dbReference type="InterPro" id="IPR013525">
    <property type="entry name" value="ABC2_TM"/>
</dbReference>
<dbReference type="InterPro" id="IPR029481">
    <property type="entry name" value="ABC_trans_N"/>
</dbReference>
<dbReference type="InterPro" id="IPR003439">
    <property type="entry name" value="ABC_transporter-like_ATP-bd"/>
</dbReference>
<dbReference type="InterPro" id="IPR043926">
    <property type="entry name" value="ABCG_dom"/>
</dbReference>
<dbReference type="InterPro" id="IPR034001">
    <property type="entry name" value="ABCG_PDR_1"/>
</dbReference>
<dbReference type="InterPro" id="IPR034003">
    <property type="entry name" value="ABCG_PDR_2"/>
</dbReference>
<dbReference type="InterPro" id="IPR027417">
    <property type="entry name" value="P-loop_NTPase"/>
</dbReference>
<dbReference type="InterPro" id="IPR013581">
    <property type="entry name" value="PDR_assoc"/>
</dbReference>
<dbReference type="PANTHER" id="PTHR48040:SF45">
    <property type="entry name" value="PLEIOTROPIC DRUG RESISTANCE PROTEIN 1-LIKE"/>
    <property type="match status" value="1"/>
</dbReference>
<dbReference type="PANTHER" id="PTHR48040">
    <property type="entry name" value="PLEIOTROPIC DRUG RESISTANCE PROTEIN 1-LIKE ISOFORM X1"/>
    <property type="match status" value="1"/>
</dbReference>
<dbReference type="Pfam" id="PF01061">
    <property type="entry name" value="ABC2_membrane"/>
    <property type="match status" value="2"/>
</dbReference>
<dbReference type="Pfam" id="PF19055">
    <property type="entry name" value="ABC2_membrane_7"/>
    <property type="match status" value="1"/>
</dbReference>
<dbReference type="Pfam" id="PF00005">
    <property type="entry name" value="ABC_tran"/>
    <property type="match status" value="2"/>
</dbReference>
<dbReference type="Pfam" id="PF14510">
    <property type="entry name" value="ABC_trans_N"/>
    <property type="match status" value="1"/>
</dbReference>
<dbReference type="Pfam" id="PF08370">
    <property type="entry name" value="PDR_assoc"/>
    <property type="match status" value="1"/>
</dbReference>
<dbReference type="SMART" id="SM00382">
    <property type="entry name" value="AAA"/>
    <property type="match status" value="2"/>
</dbReference>
<dbReference type="SUPFAM" id="SSF52540">
    <property type="entry name" value="P-loop containing nucleoside triphosphate hydrolases"/>
    <property type="match status" value="2"/>
</dbReference>
<dbReference type="PROSITE" id="PS50893">
    <property type="entry name" value="ABC_TRANSPORTER_2"/>
    <property type="match status" value="2"/>
</dbReference>
<evidence type="ECO:0000255" key="1"/>
<evidence type="ECO:0000255" key="2">
    <source>
        <dbReference type="PROSITE-ProRule" id="PRU00434"/>
    </source>
</evidence>
<evidence type="ECO:0000256" key="3">
    <source>
        <dbReference type="SAM" id="MobiDB-lite"/>
    </source>
</evidence>
<evidence type="ECO:0000269" key="4">
    <source>
    </source>
</evidence>
<evidence type="ECO:0000269" key="5">
    <source>
    </source>
</evidence>
<evidence type="ECO:0000269" key="6">
    <source>
    </source>
</evidence>
<evidence type="ECO:0000303" key="7">
    <source>
    </source>
</evidence>
<evidence type="ECO:0000303" key="8">
    <source>
    </source>
</evidence>
<evidence type="ECO:0000305" key="9"/>
<reference key="1">
    <citation type="journal article" date="2012" name="Nature">
        <title>A petunia ABC protein controls strigolactone-dependent symbiotic signalling and branching.</title>
        <authorList>
            <person name="Kretzschmar T."/>
            <person name="Kohlen W."/>
            <person name="Sasse J."/>
            <person name="Borghi L."/>
            <person name="Schlegel M."/>
            <person name="Bachelier J.B."/>
            <person name="Reinhardt D."/>
            <person name="Bours R."/>
            <person name="Bouwmeester H.J."/>
            <person name="Martinoia E."/>
        </authorList>
    </citation>
    <scope>NUCLEOTIDE SEQUENCE [GENOMIC DNA]</scope>
    <scope>FUNCTION</scope>
    <scope>SUBCELLULAR LOCATION</scope>
    <scope>TISSUE SPECIFICITY</scope>
    <scope>INDUCTION</scope>
    <scope>DISRUPTION PHENOTYPE</scope>
</reference>
<reference key="2">
    <citation type="journal article" date="2015" name="Curr. Biol.">
        <title>Asymmetric localizations of the ABC transporter PaPDR1 trace paths of directional strigolactone transport.</title>
        <authorList>
            <person name="Sasse J."/>
            <person name="Simon S."/>
            <person name="Guebeli C."/>
            <person name="Liu G.W."/>
            <person name="Cheng X."/>
            <person name="Friml J."/>
            <person name="Bouwmeester H."/>
            <person name="Martinoia E."/>
            <person name="Borghi L."/>
        </authorList>
    </citation>
    <scope>FUNCTION</scope>
    <scope>SUBCELLULAR LOCATION</scope>
    <scope>TISSUE SPECIFICITY</scope>
</reference>
<reference key="3">
    <citation type="journal article" date="2016" name="Planta">
        <title>The importance of strigolactone transport regulation for symbiotic signaling and shoot branching.</title>
        <authorList>
            <person name="Borghi L."/>
            <person name="Liu G.W."/>
            <person name="Emonet A."/>
            <person name="Kretzschmar T."/>
            <person name="Martinoia E."/>
        </authorList>
    </citation>
    <scope>FUNCTION</scope>
    <scope>SUBCELLULAR LOCATION</scope>
</reference>
<comment type="function">
    <text evidence="4 5 6">Cellular strigolactone (SL) transporter required for the exudation of SL from the root to the soil (PubMed:22398443, PubMed:25683808, PubMed:27040840). The presence of SL in the vicinity of the roots is required for development of symbiotic interactions with arbuscular mycorrhizal fungi (AMF) (PubMed:22398443, PubMed:27040840). Transports SL in the above ground tissues and is required for the control of shoot branching (PubMed:22398443, PubMed:27040840). SL regulates plant shoot architecture by inhibiting the outgrowth of axillary buds (PubMed:22398443, PubMed:27040840). Involved in the regulation of shootward and outward directional strigolactone transport in roots (PubMed:25683808). Due to its polar localization in root cells, mediates directional shootward strigolactone transport, as well as localized outward directional transport for exudation to the soil (PubMed:25683808).</text>
</comment>
<comment type="subcellular location">
    <subcellularLocation>
        <location evidence="4 5 6">Cell membrane</location>
        <topology evidence="1">Multi-pass membrane protein</topology>
    </subcellularLocation>
    <text evidence="4 5 6">Localizes to the plasma membrane (PubMed:22398443, PubMed:25683808, PubMed:27040840). Exhibits asymmetric localization in different root tissues (PubMed:25683808). In root tips, localizes at the apical membrane of hypodermal cells (PubMed:25683808). In the hypodermal passage cells localizes in the outer-lateral membrane (PubMed:25683808).</text>
</comment>
<comment type="tissue specificity">
    <text evidence="4 5">Expressed in root hypodermal passage cells (PubMed:22398443, PubMed:25683808). Expressed in stem tissues, particularly the vasculature and nodes adjacent to leaf axils (PubMed:22398443).</text>
</comment>
<comment type="induction">
    <text evidence="4">Induced in roots by auxin, phosphate starvation, treatment with the synthetic strigolactone analog GR24, and colonization by the arbuscular mycorrhizal fungus Glomus intraradices.</text>
</comment>
<comment type="disruption phenotype">
    <text evidence="4">Enhanced branching phenotype (PubMed:22398443). Defective in strigolactone exudation from roots, and reduced symbiotic interactions with arbuscular mycorrhizal fungi (AMF) (PubMed:22398443).</text>
</comment>
<comment type="similarity">
    <text evidence="9">Belongs to the ABC transporter superfamily. ABCG family. PDR (TC 3.A.1.205) subfamily.</text>
</comment>
<protein>
    <recommendedName>
        <fullName evidence="7">Pleiotropic drug resistance protein 1</fullName>
        <shortName evidence="8">PaPDR1</shortName>
    </recommendedName>
    <alternativeName>
        <fullName evidence="9">ABC transporter G family PDR1</fullName>
    </alternativeName>
    <alternativeName>
        <fullName evidence="9">Strigolactone transporter</fullName>
    </alternativeName>
</protein>
<sequence>MEGGEELFRVSSARLSSSNVWRNSAMDVFSRSSREADDEEALKWAALEKLPTYLRIRRGILTEEEGQSREVDITKLDLVERRNLLERLIKITDEDNEKFLLKLKERIDRVGLDLPTIEVRFEHLSVDAEARVGSRALPTVFNFTVNILEDFLNYLHILPNRKQPLPILHDVSGIIKPGRMTLLLGPPSSGKTTLLLALAGKLDKDLKVSGRVTYNGHDMNEFVAQRSSAYISQYDLHIGEMTVRETLAFSARCQGVGAKYEILAELSRREKEANIKPDPDVDIFMKAAWNEGQEANVVTDYTLKILGLEICADTIVGDEMIPGISGGQRKRLTTGEMMVGPARALFMDEISTGLDSSTTYQIVNSIRQSIHILQGTAVISLLQPAPETYDLFDDIILLSDGQIVYQGPRENVLEFFEYMGFICPERKGVADFLQEVTSRKDQEQYWARREESYKFITVREFSEAFQAFHIGRKLGDELAVPFDKSKSHPAALTTKRYGVSKKELLKACTAREYLLMKRNSFVYIFKMIQLTLMASITMTLFLRTEMHRNTTIDGAVFLGALFYALIMIMFNGFSELALSIMKLPSFYKHRDLLFFPPWAYALPTWILKIPITLVEVAIWVCMTYYVIGFEADVGRFFKQLLLLICVNQMASGLFRLMGALGRNIIVANTFGSFVLLTVLVMGGFVLSRDDVKKWWIWGYWISPMMYAQNAIAVNEFLGKSWAHVPPNSTSTETLGVSFLKSRGIFPDARWYWIGAGALIGYVFLFNFLFAVALAYLNPFGKPQAVLSEETVAERNASKRGEVIELSSLGKSSSEKGNDVRRSASSRSMSSRVGSITAADLSKRRGMILPFEPLSITFDDIRYAVDMPQEMKAQGFTEDRLELLRGVSGAFRPGVLTALMGVSGAGKTTLMDVLAGRKTGGYIDGTISISGYPKQQETFARIAGYCEQTDIHSPHVTVYESLQFSAWLRLPREVDTATRKMFIEEVMELIELIPLRDALVGLPGVNGLSTEQRKRLTVAVELVANPSIIFMDEPTSGLDARAAAIVMRTVRNTVDTGRTVVCTIHQPSIDIFDAFDELLLLKRGGEEIYVGPLGRQSSHLIKYFEGIDGVPKIKDGYNPATWMLEITSVAQEGALGNDFTELYKNSELYRRNKALIKELSVPASCSKDLYFPTKYSQSFFTQCMACFWKQHWSYWRNPPYTAVRIMFTFFIALMFGTIFWDLGSRRERQQDLLNAIGSMYIAVLFLGVQNATTVQPVIAIERTVFYRERAAGMYSAMPYAFGQVMIELPYLFLQTIIYGVIVYAMIGFEWTVAKFFWYLFFMYFTLLYFTLYGMMTVAVTPNHSIAAIISSAFYAVWNLFCGFIVPKTRMPVWWRWYYYICPISWTLYGLIASQFGDIQDRLDTNETVEQFIENFFDFKHDFVGYVALILVGISVLFLFIFAFSIKTFNFQKR</sequence>
<accession>H6WS93</accession>